<protein>
    <recommendedName>
        <fullName evidence="1">NAD kinase</fullName>
        <ecNumber evidence="1">2.7.1.23</ecNumber>
    </recommendedName>
    <alternativeName>
        <fullName evidence="1">ATP-dependent NAD kinase</fullName>
    </alternativeName>
</protein>
<comment type="function">
    <text evidence="1">Involved in the regulation of the intracellular balance of NAD and NADP, and is a key enzyme in the biosynthesis of NADP. Catalyzes specifically the phosphorylation on 2'-hydroxyl of the adenosine moiety of NAD to yield NADP.</text>
</comment>
<comment type="catalytic activity">
    <reaction evidence="1">
        <text>NAD(+) + ATP = ADP + NADP(+) + H(+)</text>
        <dbReference type="Rhea" id="RHEA:18629"/>
        <dbReference type="ChEBI" id="CHEBI:15378"/>
        <dbReference type="ChEBI" id="CHEBI:30616"/>
        <dbReference type="ChEBI" id="CHEBI:57540"/>
        <dbReference type="ChEBI" id="CHEBI:58349"/>
        <dbReference type="ChEBI" id="CHEBI:456216"/>
        <dbReference type="EC" id="2.7.1.23"/>
    </reaction>
</comment>
<comment type="cofactor">
    <cofactor evidence="1">
        <name>a divalent metal cation</name>
        <dbReference type="ChEBI" id="CHEBI:60240"/>
    </cofactor>
</comment>
<comment type="subcellular location">
    <subcellularLocation>
        <location evidence="1">Cytoplasm</location>
    </subcellularLocation>
</comment>
<comment type="similarity">
    <text evidence="1">Belongs to the NAD kinase family.</text>
</comment>
<dbReference type="EC" id="2.7.1.23" evidence="1"/>
<dbReference type="EMBL" id="AB055961">
    <property type="protein sequence ID" value="BAB32727.1"/>
    <property type="molecule type" value="Genomic_DNA"/>
</dbReference>
<dbReference type="SMR" id="P58055"/>
<dbReference type="GO" id="GO:0005737">
    <property type="term" value="C:cytoplasm"/>
    <property type="evidence" value="ECO:0007669"/>
    <property type="project" value="UniProtKB-SubCell"/>
</dbReference>
<dbReference type="GO" id="GO:0005524">
    <property type="term" value="F:ATP binding"/>
    <property type="evidence" value="ECO:0007669"/>
    <property type="project" value="UniProtKB-KW"/>
</dbReference>
<dbReference type="GO" id="GO:0046872">
    <property type="term" value="F:metal ion binding"/>
    <property type="evidence" value="ECO:0007669"/>
    <property type="project" value="UniProtKB-UniRule"/>
</dbReference>
<dbReference type="GO" id="GO:0051287">
    <property type="term" value="F:NAD binding"/>
    <property type="evidence" value="ECO:0007669"/>
    <property type="project" value="UniProtKB-ARBA"/>
</dbReference>
<dbReference type="GO" id="GO:0003951">
    <property type="term" value="F:NAD+ kinase activity"/>
    <property type="evidence" value="ECO:0007669"/>
    <property type="project" value="UniProtKB-UniRule"/>
</dbReference>
<dbReference type="GO" id="GO:0019674">
    <property type="term" value="P:NAD metabolic process"/>
    <property type="evidence" value="ECO:0007669"/>
    <property type="project" value="InterPro"/>
</dbReference>
<dbReference type="GO" id="GO:0006741">
    <property type="term" value="P:NADP biosynthetic process"/>
    <property type="evidence" value="ECO:0007669"/>
    <property type="project" value="UniProtKB-UniRule"/>
</dbReference>
<dbReference type="FunFam" id="2.60.200.30:FF:000002">
    <property type="entry name" value="NAD kinase"/>
    <property type="match status" value="1"/>
</dbReference>
<dbReference type="Gene3D" id="3.40.50.10330">
    <property type="entry name" value="Probable inorganic polyphosphate/atp-NAD kinase, domain 1"/>
    <property type="match status" value="1"/>
</dbReference>
<dbReference type="Gene3D" id="2.60.200.30">
    <property type="entry name" value="Probable inorganic polyphosphate/atp-NAD kinase, domain 2"/>
    <property type="match status" value="1"/>
</dbReference>
<dbReference type="HAMAP" id="MF_00361">
    <property type="entry name" value="NAD_kinase"/>
    <property type="match status" value="1"/>
</dbReference>
<dbReference type="InterPro" id="IPR017438">
    <property type="entry name" value="ATP-NAD_kinase_N"/>
</dbReference>
<dbReference type="InterPro" id="IPR017437">
    <property type="entry name" value="ATP-NAD_kinase_PpnK-typ_C"/>
</dbReference>
<dbReference type="InterPro" id="IPR016064">
    <property type="entry name" value="NAD/diacylglycerol_kinase_sf"/>
</dbReference>
<dbReference type="InterPro" id="IPR002504">
    <property type="entry name" value="NADK"/>
</dbReference>
<dbReference type="NCBIfam" id="NF003424">
    <property type="entry name" value="PRK04885.1"/>
    <property type="match status" value="1"/>
</dbReference>
<dbReference type="PANTHER" id="PTHR20275">
    <property type="entry name" value="NAD KINASE"/>
    <property type="match status" value="1"/>
</dbReference>
<dbReference type="PANTHER" id="PTHR20275:SF0">
    <property type="entry name" value="NAD KINASE"/>
    <property type="match status" value="1"/>
</dbReference>
<dbReference type="Pfam" id="PF01513">
    <property type="entry name" value="NAD_kinase"/>
    <property type="match status" value="1"/>
</dbReference>
<dbReference type="Pfam" id="PF20143">
    <property type="entry name" value="NAD_kinase_C"/>
    <property type="match status" value="1"/>
</dbReference>
<dbReference type="SUPFAM" id="SSF111331">
    <property type="entry name" value="NAD kinase/diacylglycerol kinase-like"/>
    <property type="match status" value="1"/>
</dbReference>
<feature type="chain" id="PRO_0000120597" description="NAD kinase">
    <location>
        <begin position="1"/>
        <end position="271"/>
    </location>
</feature>
<feature type="active site" description="Proton acceptor" evidence="1">
    <location>
        <position position="52"/>
    </location>
</feature>
<feature type="binding site" evidence="1">
    <location>
        <begin position="52"/>
        <end position="53"/>
    </location>
    <ligand>
        <name>NAD(+)</name>
        <dbReference type="ChEBI" id="CHEBI:57540"/>
    </ligand>
</feature>
<feature type="binding site" evidence="1">
    <location>
        <begin position="129"/>
        <end position="130"/>
    </location>
    <ligand>
        <name>NAD(+)</name>
        <dbReference type="ChEBI" id="CHEBI:57540"/>
    </ligand>
</feature>
<feature type="binding site" evidence="1">
    <location>
        <position position="155"/>
    </location>
    <ligand>
        <name>NAD(+)</name>
        <dbReference type="ChEBI" id="CHEBI:57540"/>
    </ligand>
</feature>
<feature type="binding site" evidence="1">
    <location>
        <position position="157"/>
    </location>
    <ligand>
        <name>NAD(+)</name>
        <dbReference type="ChEBI" id="CHEBI:57540"/>
    </ligand>
</feature>
<feature type="binding site" evidence="1">
    <location>
        <position position="192"/>
    </location>
    <ligand>
        <name>NAD(+)</name>
        <dbReference type="ChEBI" id="CHEBI:57540"/>
    </ligand>
</feature>
<accession>P58055</accession>
<evidence type="ECO:0000255" key="1">
    <source>
        <dbReference type="HAMAP-Rule" id="MF_00361"/>
    </source>
</evidence>
<sequence>MKRTDAPLVFAITSKGDDISNALAQKMKTYLLDFDLRYDEEEPDLVISVGGDGTLLYAFHRYCHRLDKTAFVGVHTGHLGFYADWVPEELEKLVIAIAKTPYQVVEYPLLEVTIRYLNGGSEAKYLALNECTVKCVSGTLVMDVEIRGDLFERFRGDGLCISTPTGSTAYNKALGGAILHPSLEAIQVTEMASINNRVFRTIGSPLVLPAHHTCLLKPVNHVDFQITIDHLSLLHKEVKSIQCRVADEKVRFARFRPFPFWRRVRDSFIAD</sequence>
<name>NADK_GEOSE</name>
<gene>
    <name evidence="1" type="primary">nadK</name>
</gene>
<proteinExistence type="inferred from homology"/>
<reference key="1">
    <citation type="submission" date="2001-02" db="EMBL/GenBank/DDBJ databases">
        <title>Inorganic polyphosphate/ATP-NAD kinase of Bacillus stearothermophilus.</title>
        <authorList>
            <person name="Ohshima T."/>
            <person name="Sakuraba H."/>
        </authorList>
    </citation>
    <scope>NUCLEOTIDE SEQUENCE [GENOMIC DNA]</scope>
</reference>
<keyword id="KW-0067">ATP-binding</keyword>
<keyword id="KW-0963">Cytoplasm</keyword>
<keyword id="KW-0418">Kinase</keyword>
<keyword id="KW-0520">NAD</keyword>
<keyword id="KW-0521">NADP</keyword>
<keyword id="KW-0547">Nucleotide-binding</keyword>
<keyword id="KW-0808">Transferase</keyword>
<organism>
    <name type="scientific">Geobacillus stearothermophilus</name>
    <name type="common">Bacillus stearothermophilus</name>
    <dbReference type="NCBI Taxonomy" id="1422"/>
    <lineage>
        <taxon>Bacteria</taxon>
        <taxon>Bacillati</taxon>
        <taxon>Bacillota</taxon>
        <taxon>Bacilli</taxon>
        <taxon>Bacillales</taxon>
        <taxon>Anoxybacillaceae</taxon>
        <taxon>Geobacillus</taxon>
    </lineage>
</organism>